<comment type="function">
    <text evidence="1 2 3 7 8 9">Tick salivary platelet aggregation inhibitor that plays an important part in the anti-hemostatic strategy of ticks (PubMed:11932256). Inhibits platelet aggregation induced by ADP (IC(50)=130 nM), collagen, the thrombin receptor-activating peptide, and epinephrine, although platelets are activated and their shape changed (PubMed:11932256). Binding to platelets is similar for resting and activated platelets (Kd=50-70 nM) (PubMed:15147758). Acts by specifically binding to platelet membrane glycoprotein IIb-IIIa (ITGA2B/ITGB3) in a divalent metal ion dependent manner (Probable) (PubMed:15147758). In contrast to many disintegrins which only interacts with the beta-3 subunit, this protein interacts with the two subunits (alpha-IIb and beta-3) (Probable). Also causes disaggregation of aggregated platelets without influencing the activated spherical shape associated with aggregated platelets and causes a decrease in the number of pseudopodia on the activated platelet surface (PubMed:12593588). Does not show any inhibitory activity for the different serine proteases tested (PubMed:11932256).</text>
</comment>
<comment type="subcellular location">
    <subcellularLocation>
        <location evidence="4">Cytoplasmic vesicle</location>
        <location evidence="4">Secretory vesicle</location>
    </subcellularLocation>
    <subcellularLocation>
        <location evidence="7 10">Secreted</location>
    </subcellularLocation>
    <text evidence="4">Before secretion, is localized to dense core granule type 'a' and to granule type 'b', but not to granules 'c' or 'd'.</text>
</comment>
<comment type="tissue specificity">
    <text evidence="4">Expressed in salivary glands.</text>
</comment>
<comment type="mass spectrometry"/>
<keyword id="KW-1217">Cell adhesion impairing toxin</keyword>
<keyword id="KW-0968">Cytoplasmic vesicle</keyword>
<keyword id="KW-0903">Direct protein sequencing</keyword>
<keyword id="KW-1015">Disulfide bond</keyword>
<keyword id="KW-1199">Hemostasis impairing toxin</keyword>
<keyword id="KW-1201">Platelet aggregation inhibiting toxin</keyword>
<keyword id="KW-0964">Secreted</keyword>
<keyword id="KW-0732">Signal</keyword>
<keyword id="KW-0800">Toxin</keyword>
<organism>
    <name type="scientific">Ornithodoros kalahariensis</name>
    <name type="common">Tick</name>
    <dbReference type="NCBI Taxonomy" id="1580572"/>
    <lineage>
        <taxon>Eukaryota</taxon>
        <taxon>Metazoa</taxon>
        <taxon>Ecdysozoa</taxon>
        <taxon>Arthropoda</taxon>
        <taxon>Chelicerata</taxon>
        <taxon>Arachnida</taxon>
        <taxon>Acari</taxon>
        <taxon>Parasitiformes</taxon>
        <taxon>Ixodida</taxon>
        <taxon>Ixodoidea</taxon>
        <taxon>Argasidae</taxon>
        <taxon>Ornithodorinae</taxon>
        <taxon>Ornithodoros</taxon>
    </lineage>
</organism>
<reference evidence="11" key="1">
    <citation type="journal article" date="2002" name="J. Biol. Chem.">
        <title>Savignygrin, a platelet aggregation inhibitor from the soft tick Ornithodoros savignyi, presents the RGD integrin recognition motif on the Kunitz-BPTI fold.</title>
        <authorList>
            <person name="Mans B.J."/>
            <person name="Louw A.I."/>
            <person name="Neitz A.W."/>
        </authorList>
    </citation>
    <scope>NUCLEOTIDE SEQUENCE [MRNA]</scope>
    <scope>PROTEIN SEQUENCE OF 22-42</scope>
    <scope>FUNCTION</scope>
    <scope>MASS SPECTROMETRY</scope>
    <scope>3D-STRUCTURE MODELING</scope>
    <source>
        <tissue>Salivary gland</tissue>
    </source>
</reference>
<reference key="2">
    <citation type="journal article" date="2002" name="Exp. Appl. Acarol.">
        <title>Disaggregation of aggregated platelets by savignygrin, a alphaIIbeta3 antagonist from Ornithodoros savignyi.</title>
        <authorList>
            <person name="Mans B.J."/>
            <person name="Louw A.I."/>
            <person name="Neitz A.W."/>
        </authorList>
    </citation>
    <scope>FUNCTION</scope>
</reference>
<reference key="3">
    <citation type="journal article" date="2004" name="Exp. Appl. Acarol.">
        <title>A reassessment of argasid tick salivary gland ultrastructure from an immuno-cytochemical perspective.</title>
        <authorList>
            <person name="Mans B.J."/>
            <person name="Venter J.D."/>
            <person name="Coons L.B."/>
            <person name="Louw A.I."/>
            <person name="Neitz A.W."/>
        </authorList>
    </citation>
    <scope>TISSUE SPECIFICITY</scope>
    <scope>SUBCELLULAR LOCATION</scope>
    <source>
        <tissue>Salivary gland</tissue>
    </source>
</reference>
<reference key="4">
    <citation type="journal article" date="2004" name="Insect Biochem. Mol. Biol.">
        <title>The mechanism of alphaIIbbeta3 antagonism by savignygrin and its implications for the evolution of anti-hemostatic strategies in soft ticks.</title>
        <authorList>
            <person name="Mans B.J."/>
            <person name="Neitz A.W."/>
        </authorList>
    </citation>
    <scope>FUNCTION</scope>
    <scope>3D-STRUCTURE MODELING IN COMPLEX WITH INTEGRIN ITGA2B/ITGB3</scope>
    <source>
        <tissue>Salivary gland</tissue>
    </source>
</reference>
<sequence>MQANIFVFAFLLLSVAVAAYGYQPECLEPSLYGCRGDEDATFGWTFDREDGGCRQGSYCTRFGQPKNYFRSERDCKKACGNA</sequence>
<protein>
    <recommendedName>
        <fullName evidence="5 6">Savignygrin (+)</fullName>
    </recommendedName>
    <alternativeName>
        <fullName evidence="5">Platelet aggregation inhibitor</fullName>
        <shortName evidence="5">PAI</shortName>
    </alternativeName>
</protein>
<proteinExistence type="evidence at protein level"/>
<accession>Q8MVZ3</accession>
<dbReference type="EMBL" id="AF452885">
    <property type="protein sequence ID" value="AAM54047.1"/>
    <property type="molecule type" value="mRNA"/>
</dbReference>
<dbReference type="SMR" id="Q8MVZ3"/>
<dbReference type="GO" id="GO:0005576">
    <property type="term" value="C:extracellular region"/>
    <property type="evidence" value="ECO:0007669"/>
    <property type="project" value="UniProtKB-SubCell"/>
</dbReference>
<dbReference type="GO" id="GO:0030133">
    <property type="term" value="C:transport vesicle"/>
    <property type="evidence" value="ECO:0007669"/>
    <property type="project" value="UniProtKB-SubCell"/>
</dbReference>
<dbReference type="GO" id="GO:0004867">
    <property type="term" value="F:serine-type endopeptidase inhibitor activity"/>
    <property type="evidence" value="ECO:0007669"/>
    <property type="project" value="InterPro"/>
</dbReference>
<dbReference type="GO" id="GO:0090729">
    <property type="term" value="F:toxin activity"/>
    <property type="evidence" value="ECO:0007669"/>
    <property type="project" value="UniProtKB-KW"/>
</dbReference>
<dbReference type="Gene3D" id="4.10.410.10">
    <property type="entry name" value="Pancreatic trypsin inhibitor Kunitz domain"/>
    <property type="match status" value="1"/>
</dbReference>
<dbReference type="InterPro" id="IPR036880">
    <property type="entry name" value="Kunitz_BPTI_sf"/>
</dbReference>
<dbReference type="SUPFAM" id="SSF57362">
    <property type="entry name" value="BPTI-like"/>
    <property type="match status" value="1"/>
</dbReference>
<feature type="signal peptide" evidence="7">
    <location>
        <begin position="1"/>
        <end position="21"/>
    </location>
</feature>
<feature type="chain" id="PRO_0000456103" description="Savignygrin (+)" evidence="7">
    <location>
        <begin position="22"/>
        <end position="82"/>
    </location>
</feature>
<feature type="short sequence motif" description="Cell attachment site" evidence="1">
    <location>
        <begin position="35"/>
        <end position="37"/>
    </location>
</feature>
<feature type="disulfide bond" evidence="7">
    <location>
        <begin position="26"/>
        <end position="79"/>
    </location>
</feature>
<feature type="disulfide bond" evidence="7">
    <location>
        <begin position="34"/>
        <end position="59"/>
    </location>
</feature>
<feature type="disulfide bond" evidence="7">
    <location>
        <begin position="53"/>
        <end position="75"/>
    </location>
</feature>
<evidence type="ECO:0000269" key="1">
    <source>
    </source>
</evidence>
<evidence type="ECO:0000269" key="2">
    <source>
    </source>
</evidence>
<evidence type="ECO:0000269" key="3">
    <source>
    </source>
</evidence>
<evidence type="ECO:0000269" key="4">
    <source>
    </source>
</evidence>
<evidence type="ECO:0000303" key="5">
    <source>
    </source>
</evidence>
<evidence type="ECO:0000303" key="6">
    <source>
    </source>
</evidence>
<evidence type="ECO:0000305" key="7">
    <source>
    </source>
</evidence>
<evidence type="ECO:0000305" key="8">
    <source>
    </source>
</evidence>
<evidence type="ECO:0000305" key="9">
    <source>
    </source>
</evidence>
<evidence type="ECO:0000305" key="10">
    <source>
    </source>
</evidence>
<evidence type="ECO:0000312" key="11">
    <source>
        <dbReference type="EMBL" id="AAM54047.1"/>
    </source>
</evidence>
<name>KUNPP_ORNKA</name>